<organism>
    <name type="scientific">Bacillus subtilis (strain 168)</name>
    <dbReference type="NCBI Taxonomy" id="224308"/>
    <lineage>
        <taxon>Bacteria</taxon>
        <taxon>Bacillati</taxon>
        <taxon>Bacillota</taxon>
        <taxon>Bacilli</taxon>
        <taxon>Bacillales</taxon>
        <taxon>Bacillaceae</taxon>
        <taxon>Bacillus</taxon>
    </lineage>
</organism>
<name>TAGO_BACSU</name>
<proteinExistence type="evidence at protein level"/>
<reference key="1">
    <citation type="journal article" date="2002" name="Microbiology">
        <title>tagO is involved in the synthesis of all anionic cell-wall polymers in Bacillus subtilis 168.</title>
        <authorList>
            <person name="Soldo B."/>
            <person name="Lazarevic V."/>
            <person name="Karamata D."/>
        </authorList>
    </citation>
    <scope>NUCLEOTIDE SEQUENCE [GENOMIC DNA]</scope>
    <scope>FUNCTION</scope>
    <source>
        <strain>168</strain>
    </source>
</reference>
<reference key="2">
    <citation type="journal article" date="1997" name="Nature">
        <title>The complete genome sequence of the Gram-positive bacterium Bacillus subtilis.</title>
        <authorList>
            <person name="Kunst F."/>
            <person name="Ogasawara N."/>
            <person name="Moszer I."/>
            <person name="Albertini A.M."/>
            <person name="Alloni G."/>
            <person name="Azevedo V."/>
            <person name="Bertero M.G."/>
            <person name="Bessieres P."/>
            <person name="Bolotin A."/>
            <person name="Borchert S."/>
            <person name="Borriss R."/>
            <person name="Boursier L."/>
            <person name="Brans A."/>
            <person name="Braun M."/>
            <person name="Brignell S.C."/>
            <person name="Bron S."/>
            <person name="Brouillet S."/>
            <person name="Bruschi C.V."/>
            <person name="Caldwell B."/>
            <person name="Capuano V."/>
            <person name="Carter N.M."/>
            <person name="Choi S.-K."/>
            <person name="Codani J.-J."/>
            <person name="Connerton I.F."/>
            <person name="Cummings N.J."/>
            <person name="Daniel R.A."/>
            <person name="Denizot F."/>
            <person name="Devine K.M."/>
            <person name="Duesterhoeft A."/>
            <person name="Ehrlich S.D."/>
            <person name="Emmerson P.T."/>
            <person name="Entian K.-D."/>
            <person name="Errington J."/>
            <person name="Fabret C."/>
            <person name="Ferrari E."/>
            <person name="Foulger D."/>
            <person name="Fritz C."/>
            <person name="Fujita M."/>
            <person name="Fujita Y."/>
            <person name="Fuma S."/>
            <person name="Galizzi A."/>
            <person name="Galleron N."/>
            <person name="Ghim S.-Y."/>
            <person name="Glaser P."/>
            <person name="Goffeau A."/>
            <person name="Golightly E.J."/>
            <person name="Grandi G."/>
            <person name="Guiseppi G."/>
            <person name="Guy B.J."/>
            <person name="Haga K."/>
            <person name="Haiech J."/>
            <person name="Harwood C.R."/>
            <person name="Henaut A."/>
            <person name="Hilbert H."/>
            <person name="Holsappel S."/>
            <person name="Hosono S."/>
            <person name="Hullo M.-F."/>
            <person name="Itaya M."/>
            <person name="Jones L.-M."/>
            <person name="Joris B."/>
            <person name="Karamata D."/>
            <person name="Kasahara Y."/>
            <person name="Klaerr-Blanchard M."/>
            <person name="Klein C."/>
            <person name="Kobayashi Y."/>
            <person name="Koetter P."/>
            <person name="Koningstein G."/>
            <person name="Krogh S."/>
            <person name="Kumano M."/>
            <person name="Kurita K."/>
            <person name="Lapidus A."/>
            <person name="Lardinois S."/>
            <person name="Lauber J."/>
            <person name="Lazarevic V."/>
            <person name="Lee S.-M."/>
            <person name="Levine A."/>
            <person name="Liu H."/>
            <person name="Masuda S."/>
            <person name="Mauel C."/>
            <person name="Medigue C."/>
            <person name="Medina N."/>
            <person name="Mellado R.P."/>
            <person name="Mizuno M."/>
            <person name="Moestl D."/>
            <person name="Nakai S."/>
            <person name="Noback M."/>
            <person name="Noone D."/>
            <person name="O'Reilly M."/>
            <person name="Ogawa K."/>
            <person name="Ogiwara A."/>
            <person name="Oudega B."/>
            <person name="Park S.-H."/>
            <person name="Parro V."/>
            <person name="Pohl T.M."/>
            <person name="Portetelle D."/>
            <person name="Porwollik S."/>
            <person name="Prescott A.M."/>
            <person name="Presecan E."/>
            <person name="Pujic P."/>
            <person name="Purnelle B."/>
            <person name="Rapoport G."/>
            <person name="Rey M."/>
            <person name="Reynolds S."/>
            <person name="Rieger M."/>
            <person name="Rivolta C."/>
            <person name="Rocha E."/>
            <person name="Roche B."/>
            <person name="Rose M."/>
            <person name="Sadaie Y."/>
            <person name="Sato T."/>
            <person name="Scanlan E."/>
            <person name="Schleich S."/>
            <person name="Schroeter R."/>
            <person name="Scoffone F."/>
            <person name="Sekiguchi J."/>
            <person name="Sekowska A."/>
            <person name="Seror S.J."/>
            <person name="Serror P."/>
            <person name="Shin B.-S."/>
            <person name="Soldo B."/>
            <person name="Sorokin A."/>
            <person name="Tacconi E."/>
            <person name="Takagi T."/>
            <person name="Takahashi H."/>
            <person name="Takemaru K."/>
            <person name="Takeuchi M."/>
            <person name="Tamakoshi A."/>
            <person name="Tanaka T."/>
            <person name="Terpstra P."/>
            <person name="Tognoni A."/>
            <person name="Tosato V."/>
            <person name="Uchiyama S."/>
            <person name="Vandenbol M."/>
            <person name="Vannier F."/>
            <person name="Vassarotti A."/>
            <person name="Viari A."/>
            <person name="Wambutt R."/>
            <person name="Wedler E."/>
            <person name="Wedler H."/>
            <person name="Weitzenegger T."/>
            <person name="Winters P."/>
            <person name="Wipat A."/>
            <person name="Yamamoto H."/>
            <person name="Yamane K."/>
            <person name="Yasumoto K."/>
            <person name="Yata K."/>
            <person name="Yoshida K."/>
            <person name="Yoshikawa H.-F."/>
            <person name="Zumstein E."/>
            <person name="Yoshikawa H."/>
            <person name="Danchin A."/>
        </authorList>
    </citation>
    <scope>NUCLEOTIDE SEQUENCE [LARGE SCALE GENOMIC DNA]</scope>
    <source>
        <strain>168</strain>
    </source>
</reference>
<keyword id="KW-1003">Cell membrane</keyword>
<keyword id="KW-0961">Cell wall biogenesis/degradation</keyword>
<keyword id="KW-0328">Glycosyltransferase</keyword>
<keyword id="KW-0460">Magnesium</keyword>
<keyword id="KW-0464">Manganese</keyword>
<keyword id="KW-0472">Membrane</keyword>
<keyword id="KW-1185">Reference proteome</keyword>
<keyword id="KW-0777">Teichoic acid biosynthesis</keyword>
<keyword id="KW-0808">Transferase</keyword>
<keyword id="KW-0812">Transmembrane</keyword>
<keyword id="KW-1133">Transmembrane helix</keyword>
<evidence type="ECO:0000250" key="1"/>
<evidence type="ECO:0000255" key="2"/>
<evidence type="ECO:0000305" key="3"/>
<evidence type="ECO:0000305" key="4">
    <source>
    </source>
</evidence>
<dbReference type="EC" id="2.7.8.33"/>
<dbReference type="EMBL" id="AJ004803">
    <property type="protein sequence ID" value="CAA06152.1"/>
    <property type="molecule type" value="Genomic_DNA"/>
</dbReference>
<dbReference type="EMBL" id="AL009126">
    <property type="protein sequence ID" value="CAB15570.1"/>
    <property type="molecule type" value="Genomic_DNA"/>
</dbReference>
<dbReference type="PIR" id="B69721">
    <property type="entry name" value="B69721"/>
</dbReference>
<dbReference type="RefSeq" id="NP_391433.1">
    <property type="nucleotide sequence ID" value="NC_000964.3"/>
</dbReference>
<dbReference type="RefSeq" id="WP_003227975.1">
    <property type="nucleotide sequence ID" value="NZ_OZ025638.1"/>
</dbReference>
<dbReference type="SMR" id="O34753"/>
<dbReference type="FunCoup" id="O34753">
    <property type="interactions" value="360"/>
</dbReference>
<dbReference type="IntAct" id="O34753">
    <property type="interactions" value="5"/>
</dbReference>
<dbReference type="STRING" id="224308.BSU35530"/>
<dbReference type="PaxDb" id="224308-BSU35530"/>
<dbReference type="EnsemblBacteria" id="CAB15570">
    <property type="protein sequence ID" value="CAB15570"/>
    <property type="gene ID" value="BSU_35530"/>
</dbReference>
<dbReference type="GeneID" id="936757"/>
<dbReference type="KEGG" id="bsu:BSU35530"/>
<dbReference type="PATRIC" id="fig|224308.179.peg.3844"/>
<dbReference type="eggNOG" id="COG0472">
    <property type="taxonomic scope" value="Bacteria"/>
</dbReference>
<dbReference type="InParanoid" id="O34753"/>
<dbReference type="OrthoDB" id="9783652at2"/>
<dbReference type="PhylomeDB" id="O34753"/>
<dbReference type="BioCyc" id="BSUB:BSU35530-MONOMER"/>
<dbReference type="BioCyc" id="MetaCyc:BSU35530-MONOMER"/>
<dbReference type="BRENDA" id="2.7.8.33">
    <property type="organism ID" value="658"/>
</dbReference>
<dbReference type="UniPathway" id="UPA00789"/>
<dbReference type="UniPathway" id="UPA00827"/>
<dbReference type="Proteomes" id="UP000001570">
    <property type="component" value="Chromosome"/>
</dbReference>
<dbReference type="GO" id="GO:0005886">
    <property type="term" value="C:plasma membrane"/>
    <property type="evidence" value="ECO:0000318"/>
    <property type="project" value="GO_Central"/>
</dbReference>
<dbReference type="GO" id="GO:0016757">
    <property type="term" value="F:glycosyltransferase activity"/>
    <property type="evidence" value="ECO:0007669"/>
    <property type="project" value="UniProtKB-KW"/>
</dbReference>
<dbReference type="GO" id="GO:0000287">
    <property type="term" value="F:magnesium ion binding"/>
    <property type="evidence" value="ECO:0000250"/>
    <property type="project" value="UniProtKB"/>
</dbReference>
<dbReference type="GO" id="GO:0030145">
    <property type="term" value="F:manganese ion binding"/>
    <property type="evidence" value="ECO:0000250"/>
    <property type="project" value="UniProtKB"/>
</dbReference>
<dbReference type="GO" id="GO:0016780">
    <property type="term" value="F:phosphotransferase activity, for other substituted phosphate groups"/>
    <property type="evidence" value="ECO:0000250"/>
    <property type="project" value="UniProtKB"/>
</dbReference>
<dbReference type="GO" id="GO:0036380">
    <property type="term" value="F:UDP-N-acetylglucosamine-undecaprenyl-phosphate N-acetylglucosaminephosphotransferase activity"/>
    <property type="evidence" value="ECO:0007669"/>
    <property type="project" value="UniProtKB-EC"/>
</dbReference>
<dbReference type="GO" id="GO:0044038">
    <property type="term" value="P:cell wall macromolecule biosynthetic process"/>
    <property type="evidence" value="ECO:0000318"/>
    <property type="project" value="GO_Central"/>
</dbReference>
<dbReference type="GO" id="GO:0071555">
    <property type="term" value="P:cell wall organization"/>
    <property type="evidence" value="ECO:0000318"/>
    <property type="project" value="GO_Central"/>
</dbReference>
<dbReference type="GO" id="GO:0009103">
    <property type="term" value="P:lipopolysaccharide biosynthetic process"/>
    <property type="evidence" value="ECO:0000318"/>
    <property type="project" value="GO_Central"/>
</dbReference>
<dbReference type="GO" id="GO:0019350">
    <property type="term" value="P:teichoic acid biosynthetic process"/>
    <property type="evidence" value="ECO:0007669"/>
    <property type="project" value="UniProtKB-KW"/>
</dbReference>
<dbReference type="CDD" id="cd06853">
    <property type="entry name" value="GT_WecA_like"/>
    <property type="match status" value="1"/>
</dbReference>
<dbReference type="InterPro" id="IPR000715">
    <property type="entry name" value="Glycosyl_transferase_4"/>
</dbReference>
<dbReference type="InterPro" id="IPR018480">
    <property type="entry name" value="PNAcMuramoyl-5peptid_Trfase_CS"/>
</dbReference>
<dbReference type="PANTHER" id="PTHR22926">
    <property type="entry name" value="PHOSPHO-N-ACETYLMURAMOYL-PENTAPEPTIDE-TRANSFERASE"/>
    <property type="match status" value="1"/>
</dbReference>
<dbReference type="PANTHER" id="PTHR22926:SF3">
    <property type="entry name" value="UNDECAPRENYL-PHOSPHATE ALPHA-N-ACETYLGLUCOSAMINYL 1-PHOSPHATE TRANSFERASE"/>
    <property type="match status" value="1"/>
</dbReference>
<dbReference type="Pfam" id="PF00953">
    <property type="entry name" value="Glycos_transf_4"/>
    <property type="match status" value="1"/>
</dbReference>
<accession>O34753</accession>
<gene>
    <name type="primary">tagO</name>
    <name type="synonym">yvhI</name>
    <name type="ordered locus">BSU35530</name>
</gene>
<comment type="function">
    <text evidence="4">Catalyzes the formation of undecaprenyl-PP-N-acetylglucosamine. Involved in the synthesis of anionic cell-wall polymers as it mediates the initiation of the linkage unit formation that appears to be common to the two types of teichoic acids attached to the peptidoglycan of B.subtilis; may also be involved in teichuronic acid biosynthesis (Probable).</text>
</comment>
<comment type="catalytic activity">
    <reaction>
        <text>di-trans,octa-cis-undecaprenyl phosphate + UDP-N-acetyl-alpha-D-glucosamine = N-acetyl-alpha-D-glucosaminyl-di-trans,octa-cis-undecaprenyl diphosphate + UMP</text>
        <dbReference type="Rhea" id="RHEA:28090"/>
        <dbReference type="ChEBI" id="CHEBI:57705"/>
        <dbReference type="ChEBI" id="CHEBI:57865"/>
        <dbReference type="ChEBI" id="CHEBI:60392"/>
        <dbReference type="ChEBI" id="CHEBI:62959"/>
        <dbReference type="EC" id="2.7.8.33"/>
    </reaction>
</comment>
<comment type="cofactor">
    <cofactor evidence="1">
        <name>Mg(2+)</name>
        <dbReference type="ChEBI" id="CHEBI:18420"/>
    </cofactor>
</comment>
<comment type="cofactor">
    <cofactor evidence="1">
        <name>Mn(2+)</name>
        <dbReference type="ChEBI" id="CHEBI:29035"/>
    </cofactor>
</comment>
<comment type="pathway">
    <text>Cell wall biogenesis; poly(glucopyranosyl N-acetylgalactosamine 1-phosphate) teichoic acid biosynthesis.</text>
</comment>
<comment type="pathway">
    <text>Cell wall biogenesis; poly(glycerol phosphate) teichoic acid biosynthesis.</text>
</comment>
<comment type="interaction">
    <interactant intactId="EBI-6401688">
        <id>O34753</id>
    </interactant>
    <interactant intactId="EBI-5246853">
        <id>Q01467</id>
        <label>mreD</label>
    </interactant>
    <organismsDiffer>false</organismsDiffer>
    <experiments>3</experiments>
</comment>
<comment type="subcellular location">
    <subcellularLocation>
        <location evidence="1">Cell membrane</location>
        <topology evidence="1">Multi-pass membrane protein</topology>
    </subcellularLocation>
</comment>
<comment type="similarity">
    <text evidence="3">Belongs to the glycosyltransferase 4 family.</text>
</comment>
<sequence>MLDERMIRIVVAFIVSLLTVLIITPIVKRIAIKIGAVDQPSNRKVHDKIMPRMGGLAIFIGVVAGVLASGIYTETRMTAITVGAFIIIVLGILDDKYQLSAKVKFLIQLGVAIMIVSTGLKMDFFSVPFLTERFELGWMAYPLTVLWIVGITNAINLIDGLDGLAAGLSVIGLSTIAVMALSGGKVLILSLSLVVIASTLGFLFYNFHPAKIFMGDTGSLFLGYSISILSLLGLYKSVTLFSIVIPIIILGVPIFDTTFAIIRRILNKQPISAPDKSHIHHRLMAFGLSHRMSVLVIYLIGFIFSISAIVLKSATIWLSLFIIFILIIFMQIIAEVTGLVNEKFKPFTKFYKRLVKRN</sequence>
<feature type="chain" id="PRO_0000108939" description="Probable undecaprenyl-phosphate N-acetylglucosaminyl 1-phosphate transferase">
    <location>
        <begin position="1"/>
        <end position="358"/>
    </location>
</feature>
<feature type="transmembrane region" description="Helical" evidence="2">
    <location>
        <begin position="10"/>
        <end position="32"/>
    </location>
</feature>
<feature type="transmembrane region" description="Helical" evidence="2">
    <location>
        <begin position="53"/>
        <end position="72"/>
    </location>
</feature>
<feature type="transmembrane region" description="Helical" evidence="2">
    <location>
        <begin position="76"/>
        <end position="93"/>
    </location>
</feature>
<feature type="transmembrane region" description="Helical" evidence="2">
    <location>
        <begin position="105"/>
        <end position="127"/>
    </location>
</feature>
<feature type="transmembrane region" description="Helical" evidence="2">
    <location>
        <begin position="137"/>
        <end position="157"/>
    </location>
</feature>
<feature type="transmembrane region" description="Helical" evidence="2">
    <location>
        <begin position="164"/>
        <end position="181"/>
    </location>
</feature>
<feature type="transmembrane region" description="Helical" evidence="2">
    <location>
        <begin position="186"/>
        <end position="205"/>
    </location>
</feature>
<feature type="transmembrane region" description="Helical" evidence="2">
    <location>
        <begin position="218"/>
        <end position="235"/>
    </location>
</feature>
<feature type="transmembrane region" description="Helical" evidence="2">
    <location>
        <begin position="240"/>
        <end position="262"/>
    </location>
</feature>
<feature type="transmembrane region" description="Helical" evidence="2">
    <location>
        <begin position="292"/>
        <end position="311"/>
    </location>
</feature>
<feature type="transmembrane region" description="Helical" evidence="2">
    <location>
        <begin position="316"/>
        <end position="338"/>
    </location>
</feature>
<feature type="site" description="Important in orienting the substrate" evidence="1">
    <location>
        <position position="94"/>
    </location>
</feature>
<feature type="site" description="Important in orienting the substrate; probably interacts with magnesium or manganese" evidence="1">
    <location>
        <position position="95"/>
    </location>
</feature>
<feature type="site" description="Could be required for catalysis" evidence="1">
    <location>
        <position position="159"/>
    </location>
</feature>
<feature type="site" description="Could be required for catalysis" evidence="1">
    <location>
        <position position="162"/>
    </location>
</feature>
<protein>
    <recommendedName>
        <fullName>Probable undecaprenyl-phosphate N-acetylglucosaminyl 1-phosphate transferase</fullName>
        <ecNumber>2.7.8.33</ecNumber>
    </recommendedName>
    <alternativeName>
        <fullName>UDP-GlcNAc:undecaprenyl-phosphate GlcNAc-1-phosphate transferase</fullName>
    </alternativeName>
    <alternativeName>
        <fullName>Undecaprenyl-Phosphate GlcNAc-1-phosphate transferase</fullName>
    </alternativeName>
</protein>